<keyword id="KW-0012">Acyltransferase</keyword>
<keyword id="KW-0256">Endoplasmic reticulum</keyword>
<keyword id="KW-0444">Lipid biosynthesis</keyword>
<keyword id="KW-0443">Lipid metabolism</keyword>
<keyword id="KW-0472">Membrane</keyword>
<keyword id="KW-0594">Phospholipid biosynthesis</keyword>
<keyword id="KW-1208">Phospholipid metabolism</keyword>
<keyword id="KW-1185">Reference proteome</keyword>
<keyword id="KW-0808">Transferase</keyword>
<keyword id="KW-0812">Transmembrane</keyword>
<keyword id="KW-1133">Transmembrane helix</keyword>
<name>GPT3L_DANRE</name>
<sequence length="443" mass="50522">MEGYWAVLFPVLKVWFSCVIVLIMLPAMFGISLGITETYMKLLIKTLEWATHRIQRASRAEEILKESASNGLIQRDNSSLEQEIEELRRNRPKSADRGDFTLSDVLYFSRKGFESIVEDDVTQRFTSEELVSWNLLTRTNNNFQYISLRLTVLWVVGVVVRYCILLPLRITLTTIGLTWLVIGTTTVGFLPNCRVKNWLSELVHLMCYRICARGLSATIHFHNKQNRPKKGGICVANHTSPIDVVILANDGCYAMVGQVHGGLMGVLQRAMERSCPHIWFERSEMRDRHLVTQRLKDHVNAKTKLPILIFPEGTCINNTSVMMFKKGSFEIGGTIYPVAIKYDPQFGDAFWNSSKYSIMSYLLRMMTSWAIVCNVWYLPPMTHEEGEDAVQFANRVKSTIAQQGGLVDLAWDGGLKRAKVKDSFKEQQQKKYSHMVVGEDSSD</sequence>
<feature type="chain" id="PRO_0000291574" description="Glycerol-3-phosphate acyltransferase 3-like">
    <location>
        <begin position="1"/>
        <end position="443"/>
    </location>
</feature>
<feature type="transmembrane region" description="Helical" evidence="2">
    <location>
        <begin position="15"/>
        <end position="35"/>
    </location>
</feature>
<feature type="transmembrane region" description="Helical" evidence="2">
    <location>
        <begin position="146"/>
        <end position="166"/>
    </location>
</feature>
<feature type="transmembrane region" description="Helical" evidence="2">
    <location>
        <begin position="170"/>
        <end position="190"/>
    </location>
</feature>
<feature type="transmembrane region" description="Helical" evidence="2">
    <location>
        <begin position="358"/>
        <end position="378"/>
    </location>
</feature>
<feature type="short sequence motif" description="HXXXXD motif">
    <location>
        <begin position="238"/>
        <end position="243"/>
    </location>
</feature>
<reference key="1">
    <citation type="journal article" date="2013" name="Nature">
        <title>The zebrafish reference genome sequence and its relationship to the human genome.</title>
        <authorList>
            <person name="Howe K."/>
            <person name="Clark M.D."/>
            <person name="Torroja C.F."/>
            <person name="Torrance J."/>
            <person name="Berthelot C."/>
            <person name="Muffato M."/>
            <person name="Collins J.E."/>
            <person name="Humphray S."/>
            <person name="McLaren K."/>
            <person name="Matthews L."/>
            <person name="McLaren S."/>
            <person name="Sealy I."/>
            <person name="Caccamo M."/>
            <person name="Churcher C."/>
            <person name="Scott C."/>
            <person name="Barrett J.C."/>
            <person name="Koch R."/>
            <person name="Rauch G.J."/>
            <person name="White S."/>
            <person name="Chow W."/>
            <person name="Kilian B."/>
            <person name="Quintais L.T."/>
            <person name="Guerra-Assuncao J.A."/>
            <person name="Zhou Y."/>
            <person name="Gu Y."/>
            <person name="Yen J."/>
            <person name="Vogel J.H."/>
            <person name="Eyre T."/>
            <person name="Redmond S."/>
            <person name="Banerjee R."/>
            <person name="Chi J."/>
            <person name="Fu B."/>
            <person name="Langley E."/>
            <person name="Maguire S.F."/>
            <person name="Laird G.K."/>
            <person name="Lloyd D."/>
            <person name="Kenyon E."/>
            <person name="Donaldson S."/>
            <person name="Sehra H."/>
            <person name="Almeida-King J."/>
            <person name="Loveland J."/>
            <person name="Trevanion S."/>
            <person name="Jones M."/>
            <person name="Quail M."/>
            <person name="Willey D."/>
            <person name="Hunt A."/>
            <person name="Burton J."/>
            <person name="Sims S."/>
            <person name="McLay K."/>
            <person name="Plumb B."/>
            <person name="Davis J."/>
            <person name="Clee C."/>
            <person name="Oliver K."/>
            <person name="Clark R."/>
            <person name="Riddle C."/>
            <person name="Elliot D."/>
            <person name="Threadgold G."/>
            <person name="Harden G."/>
            <person name="Ware D."/>
            <person name="Begum S."/>
            <person name="Mortimore B."/>
            <person name="Kerry G."/>
            <person name="Heath P."/>
            <person name="Phillimore B."/>
            <person name="Tracey A."/>
            <person name="Corby N."/>
            <person name="Dunn M."/>
            <person name="Johnson C."/>
            <person name="Wood J."/>
            <person name="Clark S."/>
            <person name="Pelan S."/>
            <person name="Griffiths G."/>
            <person name="Smith M."/>
            <person name="Glithero R."/>
            <person name="Howden P."/>
            <person name="Barker N."/>
            <person name="Lloyd C."/>
            <person name="Stevens C."/>
            <person name="Harley J."/>
            <person name="Holt K."/>
            <person name="Panagiotidis G."/>
            <person name="Lovell J."/>
            <person name="Beasley H."/>
            <person name="Henderson C."/>
            <person name="Gordon D."/>
            <person name="Auger K."/>
            <person name="Wright D."/>
            <person name="Collins J."/>
            <person name="Raisen C."/>
            <person name="Dyer L."/>
            <person name="Leung K."/>
            <person name="Robertson L."/>
            <person name="Ambridge K."/>
            <person name="Leongamornlert D."/>
            <person name="McGuire S."/>
            <person name="Gilderthorp R."/>
            <person name="Griffiths C."/>
            <person name="Manthravadi D."/>
            <person name="Nichol S."/>
            <person name="Barker G."/>
            <person name="Whitehead S."/>
            <person name="Kay M."/>
            <person name="Brown J."/>
            <person name="Murnane C."/>
            <person name="Gray E."/>
            <person name="Humphries M."/>
            <person name="Sycamore N."/>
            <person name="Barker D."/>
            <person name="Saunders D."/>
            <person name="Wallis J."/>
            <person name="Babbage A."/>
            <person name="Hammond S."/>
            <person name="Mashreghi-Mohammadi M."/>
            <person name="Barr L."/>
            <person name="Martin S."/>
            <person name="Wray P."/>
            <person name="Ellington A."/>
            <person name="Matthews N."/>
            <person name="Ellwood M."/>
            <person name="Woodmansey R."/>
            <person name="Clark G."/>
            <person name="Cooper J."/>
            <person name="Tromans A."/>
            <person name="Grafham D."/>
            <person name="Skuce C."/>
            <person name="Pandian R."/>
            <person name="Andrews R."/>
            <person name="Harrison E."/>
            <person name="Kimberley A."/>
            <person name="Garnett J."/>
            <person name="Fosker N."/>
            <person name="Hall R."/>
            <person name="Garner P."/>
            <person name="Kelly D."/>
            <person name="Bird C."/>
            <person name="Palmer S."/>
            <person name="Gehring I."/>
            <person name="Berger A."/>
            <person name="Dooley C.M."/>
            <person name="Ersan-Urun Z."/>
            <person name="Eser C."/>
            <person name="Geiger H."/>
            <person name="Geisler M."/>
            <person name="Karotki L."/>
            <person name="Kirn A."/>
            <person name="Konantz J."/>
            <person name="Konantz M."/>
            <person name="Oberlander M."/>
            <person name="Rudolph-Geiger S."/>
            <person name="Teucke M."/>
            <person name="Lanz C."/>
            <person name="Raddatz G."/>
            <person name="Osoegawa K."/>
            <person name="Zhu B."/>
            <person name="Rapp A."/>
            <person name="Widaa S."/>
            <person name="Langford C."/>
            <person name="Yang F."/>
            <person name="Schuster S.C."/>
            <person name="Carter N.P."/>
            <person name="Harrow J."/>
            <person name="Ning Z."/>
            <person name="Herrero J."/>
            <person name="Searle S.M."/>
            <person name="Enright A."/>
            <person name="Geisler R."/>
            <person name="Plasterk R.H."/>
            <person name="Lee C."/>
            <person name="Westerfield M."/>
            <person name="de Jong P.J."/>
            <person name="Zon L.I."/>
            <person name="Postlethwait J.H."/>
            <person name="Nusslein-Volhard C."/>
            <person name="Hubbard T.J."/>
            <person name="Roest Crollius H."/>
            <person name="Rogers J."/>
            <person name="Stemple D.L."/>
        </authorList>
    </citation>
    <scope>NUCLEOTIDE SEQUENCE [LARGE SCALE GENOMIC DNA]</scope>
    <source>
        <strain>Tuebingen</strain>
    </source>
</reference>
<dbReference type="EC" id="2.3.1.15"/>
<dbReference type="EC" id="2.3.1.51"/>
<dbReference type="EMBL" id="AL928901">
    <property type="protein sequence ID" value="CAM46900.1"/>
    <property type="molecule type" value="Genomic_DNA"/>
</dbReference>
<dbReference type="RefSeq" id="NP_001092920.1">
    <property type="nucleotide sequence ID" value="NM_001099450.1"/>
</dbReference>
<dbReference type="FunCoup" id="A3KGT9">
    <property type="interactions" value="1511"/>
</dbReference>
<dbReference type="STRING" id="7955.ENSDARP00000046439"/>
<dbReference type="PaxDb" id="7955-ENSDARP00000046439"/>
<dbReference type="Ensembl" id="ENSDART00000046440">
    <property type="protein sequence ID" value="ENSDARP00000046439"/>
    <property type="gene ID" value="ENSDARG00000006491"/>
</dbReference>
<dbReference type="Ensembl" id="ENSDART00000183981">
    <property type="protein sequence ID" value="ENSDARP00000152295"/>
    <property type="gene ID" value="ENSDARG00000109952"/>
</dbReference>
<dbReference type="Ensembl" id="ENSDART00000190537">
    <property type="protein sequence ID" value="ENSDARP00000157263"/>
    <property type="gene ID" value="ENSDARG00000112415"/>
</dbReference>
<dbReference type="GeneID" id="567414"/>
<dbReference type="KEGG" id="dre:567414"/>
<dbReference type="AGR" id="ZFIN:ZDB-GENE-060531-19"/>
<dbReference type="CTD" id="567414"/>
<dbReference type="ZFIN" id="ZDB-GENE-060531-19">
    <property type="gene designation" value="agpat9l"/>
</dbReference>
<dbReference type="eggNOG" id="KOG2898">
    <property type="taxonomic scope" value="Eukaryota"/>
</dbReference>
<dbReference type="HOGENOM" id="CLU_031080_0_1_1"/>
<dbReference type="InParanoid" id="A3KGT9"/>
<dbReference type="OMA" id="VQMIHNT"/>
<dbReference type="OrthoDB" id="10051137at2759"/>
<dbReference type="PhylomeDB" id="A3KGT9"/>
<dbReference type="TreeFam" id="TF315039"/>
<dbReference type="UniPathway" id="UPA00282"/>
<dbReference type="UniPathway" id="UPA00557">
    <property type="reaction ID" value="UER00612"/>
</dbReference>
<dbReference type="PRO" id="PR:A3KGT9"/>
<dbReference type="Proteomes" id="UP000000437">
    <property type="component" value="Alternate scaffold 5"/>
</dbReference>
<dbReference type="Proteomes" id="UP000000437">
    <property type="component" value="Chromosome 5"/>
</dbReference>
<dbReference type="Bgee" id="ENSDARG00000006491">
    <property type="expression patterns" value="Expressed in intestine and 17 other cell types or tissues"/>
</dbReference>
<dbReference type="GO" id="GO:0005789">
    <property type="term" value="C:endoplasmic reticulum membrane"/>
    <property type="evidence" value="ECO:0000250"/>
    <property type="project" value="UniProtKB"/>
</dbReference>
<dbReference type="GO" id="GO:0003841">
    <property type="term" value="F:1-acylglycerol-3-phosphate O-acyltransferase activity"/>
    <property type="evidence" value="ECO:0007669"/>
    <property type="project" value="UniProtKB-EC"/>
</dbReference>
<dbReference type="GO" id="GO:0004366">
    <property type="term" value="F:glycerol-3-phosphate O-acyltransferase activity"/>
    <property type="evidence" value="ECO:0000250"/>
    <property type="project" value="UniProtKB"/>
</dbReference>
<dbReference type="GO" id="GO:0016024">
    <property type="term" value="P:CDP-diacylglycerol biosynthetic process"/>
    <property type="evidence" value="ECO:0007669"/>
    <property type="project" value="UniProtKB-UniPathway"/>
</dbReference>
<dbReference type="GO" id="GO:0019432">
    <property type="term" value="P:triglyceride biosynthetic process"/>
    <property type="evidence" value="ECO:0000250"/>
    <property type="project" value="UniProtKB"/>
</dbReference>
<dbReference type="CDD" id="cd07991">
    <property type="entry name" value="LPLAT_LPCAT1-like"/>
    <property type="match status" value="1"/>
</dbReference>
<dbReference type="InterPro" id="IPR045252">
    <property type="entry name" value="LPCAT1-like"/>
</dbReference>
<dbReference type="InterPro" id="IPR002123">
    <property type="entry name" value="Plipid/glycerol_acylTrfase"/>
</dbReference>
<dbReference type="PANTHER" id="PTHR23063:SF10">
    <property type="entry name" value="GLYCEROL-3-PHOSPHATE ACYLTRANSFERASE 3"/>
    <property type="match status" value="1"/>
</dbReference>
<dbReference type="PANTHER" id="PTHR23063">
    <property type="entry name" value="PHOSPHOLIPID ACYLTRANSFERASE"/>
    <property type="match status" value="1"/>
</dbReference>
<dbReference type="Pfam" id="PF01553">
    <property type="entry name" value="Acyltransferase"/>
    <property type="match status" value="1"/>
</dbReference>
<dbReference type="SMART" id="SM00563">
    <property type="entry name" value="PlsC"/>
    <property type="match status" value="1"/>
</dbReference>
<dbReference type="SUPFAM" id="SSF69593">
    <property type="entry name" value="Glycerol-3-phosphate (1)-acyltransferase"/>
    <property type="match status" value="1"/>
</dbReference>
<accession>A3KGT9</accession>
<evidence type="ECO:0000250" key="1"/>
<evidence type="ECO:0000255" key="2"/>
<evidence type="ECO:0000305" key="3"/>
<gene>
    <name type="primary">agpat9l</name>
    <name type="ORF">si:ch211-155m12.4</name>
</gene>
<proteinExistence type="inferred from homology"/>
<comment type="function">
    <text evidence="1">May transfer the acyl-group from acyl-coA to the sn-1 position of glycerol-3-phosphate, an essential step in glycerolipid biosynthesis. Also transfers the acyl-group from acyl-coA to the sn-2 position of 1-acyl-sn-glycerol-3-phosphate (lysophosphatidic acid, or LPA), forming 1,2-diacyl-sn-glycerol-3-phosphate (phosphatidic acid, or PA) (By similarity).</text>
</comment>
<comment type="catalytic activity">
    <reaction>
        <text>sn-glycerol 3-phosphate + an acyl-CoA = a 1-acyl-sn-glycero-3-phosphate + CoA</text>
        <dbReference type="Rhea" id="RHEA:15325"/>
        <dbReference type="ChEBI" id="CHEBI:57287"/>
        <dbReference type="ChEBI" id="CHEBI:57597"/>
        <dbReference type="ChEBI" id="CHEBI:57970"/>
        <dbReference type="ChEBI" id="CHEBI:58342"/>
        <dbReference type="EC" id="2.3.1.15"/>
    </reaction>
</comment>
<comment type="catalytic activity">
    <reaction>
        <text>a 1-acyl-sn-glycero-3-phosphate + an acyl-CoA = a 1,2-diacyl-sn-glycero-3-phosphate + CoA</text>
        <dbReference type="Rhea" id="RHEA:19709"/>
        <dbReference type="ChEBI" id="CHEBI:57287"/>
        <dbReference type="ChEBI" id="CHEBI:57970"/>
        <dbReference type="ChEBI" id="CHEBI:58342"/>
        <dbReference type="ChEBI" id="CHEBI:58608"/>
        <dbReference type="EC" id="2.3.1.51"/>
    </reaction>
</comment>
<comment type="pathway">
    <text>Glycerolipid metabolism; triacylglycerol biosynthesis.</text>
</comment>
<comment type="pathway">
    <text>Phospholipid metabolism; CDP-diacylglycerol biosynthesis; CDP-diacylglycerol from sn-glycerol 3-phosphate: step 1/3.</text>
</comment>
<comment type="subcellular location">
    <subcellularLocation>
        <location evidence="1">Endoplasmic reticulum membrane</location>
        <topology evidence="1">Multi-pass membrane protein</topology>
    </subcellularLocation>
</comment>
<comment type="domain">
    <text evidence="1">The HXXXXD motif is essential for acyltransferase activity and may constitute the binding site for the phosphate moiety of the glycerol-3-phosphate.</text>
</comment>
<comment type="similarity">
    <text evidence="3">Belongs to the 1-acyl-sn-glycerol-3-phosphate acyltransferase family.</text>
</comment>
<comment type="caution">
    <text evidence="3">Despite its name, the human homolog of this protein appears to lack measurable glycerol-3-phosphate acyltransferase activity under some conditions (PMID:19318427).</text>
</comment>
<protein>
    <recommendedName>
        <fullName>Glycerol-3-phosphate acyltransferase 3-like</fullName>
        <ecNumber>2.3.1.15</ecNumber>
    </recommendedName>
    <alternativeName>
        <fullName>1-acyl-sn-glycerol-3-phosphate O-acyltransferase 9-like</fullName>
        <shortName>1-AGP acyltransferase 9-like</shortName>
        <shortName>1-AGPAT 9-like</shortName>
        <ecNumber>2.3.1.51</ecNumber>
    </alternativeName>
    <alternativeName>
        <fullName>Lysophosphatidic acid acyltransferase theta-like</fullName>
        <shortName>LPAAT-theta-like</shortName>
    </alternativeName>
</protein>
<organism>
    <name type="scientific">Danio rerio</name>
    <name type="common">Zebrafish</name>
    <name type="synonym">Brachydanio rerio</name>
    <dbReference type="NCBI Taxonomy" id="7955"/>
    <lineage>
        <taxon>Eukaryota</taxon>
        <taxon>Metazoa</taxon>
        <taxon>Chordata</taxon>
        <taxon>Craniata</taxon>
        <taxon>Vertebrata</taxon>
        <taxon>Euteleostomi</taxon>
        <taxon>Actinopterygii</taxon>
        <taxon>Neopterygii</taxon>
        <taxon>Teleostei</taxon>
        <taxon>Ostariophysi</taxon>
        <taxon>Cypriniformes</taxon>
        <taxon>Danionidae</taxon>
        <taxon>Danioninae</taxon>
        <taxon>Danio</taxon>
    </lineage>
</organism>